<organism>
    <name type="scientific">Burkholderia orbicola (strain AU 1054)</name>
    <dbReference type="NCBI Taxonomy" id="331271"/>
    <lineage>
        <taxon>Bacteria</taxon>
        <taxon>Pseudomonadati</taxon>
        <taxon>Pseudomonadota</taxon>
        <taxon>Betaproteobacteria</taxon>
        <taxon>Burkholderiales</taxon>
        <taxon>Burkholderiaceae</taxon>
        <taxon>Burkholderia</taxon>
        <taxon>Burkholderia cepacia complex</taxon>
        <taxon>Burkholderia orbicola</taxon>
    </lineage>
</organism>
<proteinExistence type="inferred from homology"/>
<protein>
    <recommendedName>
        <fullName evidence="1">Pantothenate synthetase</fullName>
        <shortName evidence="1">PS</shortName>
        <ecNumber evidence="1">6.3.2.1</ecNumber>
    </recommendedName>
    <alternativeName>
        <fullName evidence="1">Pantoate--beta-alanine ligase</fullName>
    </alternativeName>
    <alternativeName>
        <fullName evidence="1">Pantoate-activating enzyme</fullName>
    </alternativeName>
</protein>
<feature type="chain" id="PRO_0000305412" description="Pantothenate synthetase">
    <location>
        <begin position="1"/>
        <end position="279"/>
    </location>
</feature>
<feature type="active site" description="Proton donor" evidence="1">
    <location>
        <position position="33"/>
    </location>
</feature>
<feature type="binding site" evidence="1">
    <location>
        <begin position="26"/>
        <end position="33"/>
    </location>
    <ligand>
        <name>ATP</name>
        <dbReference type="ChEBI" id="CHEBI:30616"/>
    </ligand>
</feature>
<feature type="binding site" evidence="1">
    <location>
        <position position="57"/>
    </location>
    <ligand>
        <name>(R)-pantoate</name>
        <dbReference type="ChEBI" id="CHEBI:15980"/>
    </ligand>
</feature>
<feature type="binding site" evidence="1">
    <location>
        <position position="57"/>
    </location>
    <ligand>
        <name>beta-alanine</name>
        <dbReference type="ChEBI" id="CHEBI:57966"/>
    </ligand>
</feature>
<feature type="binding site" evidence="1">
    <location>
        <begin position="144"/>
        <end position="147"/>
    </location>
    <ligand>
        <name>ATP</name>
        <dbReference type="ChEBI" id="CHEBI:30616"/>
    </ligand>
</feature>
<feature type="binding site" evidence="1">
    <location>
        <position position="150"/>
    </location>
    <ligand>
        <name>(R)-pantoate</name>
        <dbReference type="ChEBI" id="CHEBI:15980"/>
    </ligand>
</feature>
<feature type="binding site" evidence="1">
    <location>
        <position position="173"/>
    </location>
    <ligand>
        <name>ATP</name>
        <dbReference type="ChEBI" id="CHEBI:30616"/>
    </ligand>
</feature>
<feature type="binding site" evidence="1">
    <location>
        <begin position="181"/>
        <end position="184"/>
    </location>
    <ligand>
        <name>ATP</name>
        <dbReference type="ChEBI" id="CHEBI:30616"/>
    </ligand>
</feature>
<accession>Q1BUH1</accession>
<sequence>MKVISSIQELRDQLRGQNRTAFVPTMGNLHEGHLSLMRLARQHGDPVVASIFVNRLQFGPNEDFDKYPRTLQDDIEKLQQNNVYVLFAPTERDMYPEPQEYRVLPPDDLGGILEGEFRPGFFAGVCTVVTKLMSCVQPRVAVFGKKDYQQLMIVRRMCQQLALPVEIIAAETVRDEDGLALSSRNRYLTTDERKEAPELAKTLQRVRDSVLGGERDLGKLEQHAHTHLAERGWVPDYIAIRRRANLIAPSAAELEAGEPLVVLAAAKLGATRLIDNLEI</sequence>
<name>PANC_BURO1</name>
<gene>
    <name evidence="1" type="primary">panC</name>
    <name type="ordered locus">Bcen_1831</name>
</gene>
<dbReference type="EC" id="6.3.2.1" evidence="1"/>
<dbReference type="EMBL" id="CP000378">
    <property type="protein sequence ID" value="ABF76734.1"/>
    <property type="molecule type" value="Genomic_DNA"/>
</dbReference>
<dbReference type="SMR" id="Q1BUH1"/>
<dbReference type="HOGENOM" id="CLU_047148_0_0_4"/>
<dbReference type="UniPathway" id="UPA00028">
    <property type="reaction ID" value="UER00005"/>
</dbReference>
<dbReference type="GO" id="GO:0005829">
    <property type="term" value="C:cytosol"/>
    <property type="evidence" value="ECO:0007669"/>
    <property type="project" value="TreeGrafter"/>
</dbReference>
<dbReference type="GO" id="GO:0005524">
    <property type="term" value="F:ATP binding"/>
    <property type="evidence" value="ECO:0007669"/>
    <property type="project" value="UniProtKB-KW"/>
</dbReference>
<dbReference type="GO" id="GO:0004592">
    <property type="term" value="F:pantoate-beta-alanine ligase activity"/>
    <property type="evidence" value="ECO:0007669"/>
    <property type="project" value="UniProtKB-UniRule"/>
</dbReference>
<dbReference type="GO" id="GO:0015940">
    <property type="term" value="P:pantothenate biosynthetic process"/>
    <property type="evidence" value="ECO:0007669"/>
    <property type="project" value="UniProtKB-UniRule"/>
</dbReference>
<dbReference type="CDD" id="cd00560">
    <property type="entry name" value="PanC"/>
    <property type="match status" value="1"/>
</dbReference>
<dbReference type="Gene3D" id="3.40.50.620">
    <property type="entry name" value="HUPs"/>
    <property type="match status" value="1"/>
</dbReference>
<dbReference type="Gene3D" id="3.30.1300.10">
    <property type="entry name" value="Pantoate-beta-alanine ligase, C-terminal domain"/>
    <property type="match status" value="1"/>
</dbReference>
<dbReference type="HAMAP" id="MF_00158">
    <property type="entry name" value="PanC"/>
    <property type="match status" value="1"/>
</dbReference>
<dbReference type="InterPro" id="IPR004821">
    <property type="entry name" value="Cyt_trans-like"/>
</dbReference>
<dbReference type="InterPro" id="IPR003721">
    <property type="entry name" value="Pantoate_ligase"/>
</dbReference>
<dbReference type="InterPro" id="IPR042176">
    <property type="entry name" value="Pantoate_ligase_C"/>
</dbReference>
<dbReference type="InterPro" id="IPR014729">
    <property type="entry name" value="Rossmann-like_a/b/a_fold"/>
</dbReference>
<dbReference type="NCBIfam" id="TIGR00125">
    <property type="entry name" value="cyt_tran_rel"/>
    <property type="match status" value="1"/>
</dbReference>
<dbReference type="NCBIfam" id="TIGR00018">
    <property type="entry name" value="panC"/>
    <property type="match status" value="1"/>
</dbReference>
<dbReference type="PANTHER" id="PTHR21299">
    <property type="entry name" value="CYTIDYLATE KINASE/PANTOATE-BETA-ALANINE LIGASE"/>
    <property type="match status" value="1"/>
</dbReference>
<dbReference type="PANTHER" id="PTHR21299:SF1">
    <property type="entry name" value="PANTOATE--BETA-ALANINE LIGASE"/>
    <property type="match status" value="1"/>
</dbReference>
<dbReference type="Pfam" id="PF02569">
    <property type="entry name" value="Pantoate_ligase"/>
    <property type="match status" value="1"/>
</dbReference>
<dbReference type="SUPFAM" id="SSF52374">
    <property type="entry name" value="Nucleotidylyl transferase"/>
    <property type="match status" value="1"/>
</dbReference>
<evidence type="ECO:0000255" key="1">
    <source>
        <dbReference type="HAMAP-Rule" id="MF_00158"/>
    </source>
</evidence>
<comment type="function">
    <text evidence="1">Catalyzes the condensation of pantoate with beta-alanine in an ATP-dependent reaction via a pantoyl-adenylate intermediate.</text>
</comment>
<comment type="catalytic activity">
    <reaction evidence="1">
        <text>(R)-pantoate + beta-alanine + ATP = (R)-pantothenate + AMP + diphosphate + H(+)</text>
        <dbReference type="Rhea" id="RHEA:10912"/>
        <dbReference type="ChEBI" id="CHEBI:15378"/>
        <dbReference type="ChEBI" id="CHEBI:15980"/>
        <dbReference type="ChEBI" id="CHEBI:29032"/>
        <dbReference type="ChEBI" id="CHEBI:30616"/>
        <dbReference type="ChEBI" id="CHEBI:33019"/>
        <dbReference type="ChEBI" id="CHEBI:57966"/>
        <dbReference type="ChEBI" id="CHEBI:456215"/>
        <dbReference type="EC" id="6.3.2.1"/>
    </reaction>
</comment>
<comment type="pathway">
    <text evidence="1">Cofactor biosynthesis; (R)-pantothenate biosynthesis; (R)-pantothenate from (R)-pantoate and beta-alanine: step 1/1.</text>
</comment>
<comment type="subunit">
    <text evidence="1">Homodimer.</text>
</comment>
<comment type="subcellular location">
    <subcellularLocation>
        <location evidence="1">Cytoplasm</location>
    </subcellularLocation>
</comment>
<comment type="miscellaneous">
    <text evidence="1">The reaction proceeds by a bi uni uni bi ping pong mechanism.</text>
</comment>
<comment type="similarity">
    <text evidence="1">Belongs to the pantothenate synthetase family.</text>
</comment>
<keyword id="KW-0067">ATP-binding</keyword>
<keyword id="KW-0963">Cytoplasm</keyword>
<keyword id="KW-0436">Ligase</keyword>
<keyword id="KW-0547">Nucleotide-binding</keyword>
<keyword id="KW-0566">Pantothenate biosynthesis</keyword>
<reference key="1">
    <citation type="submission" date="2006-05" db="EMBL/GenBank/DDBJ databases">
        <title>Complete sequence of chromosome 1 of Burkholderia cenocepacia AU 1054.</title>
        <authorList>
            <consortium name="US DOE Joint Genome Institute"/>
            <person name="Copeland A."/>
            <person name="Lucas S."/>
            <person name="Lapidus A."/>
            <person name="Barry K."/>
            <person name="Detter J.C."/>
            <person name="Glavina del Rio T."/>
            <person name="Hammon N."/>
            <person name="Israni S."/>
            <person name="Dalin E."/>
            <person name="Tice H."/>
            <person name="Pitluck S."/>
            <person name="Chain P."/>
            <person name="Malfatti S."/>
            <person name="Shin M."/>
            <person name="Vergez L."/>
            <person name="Schmutz J."/>
            <person name="Larimer F."/>
            <person name="Land M."/>
            <person name="Hauser L."/>
            <person name="Kyrpides N."/>
            <person name="Lykidis A."/>
            <person name="LiPuma J.J."/>
            <person name="Konstantinidis K."/>
            <person name="Tiedje J.M."/>
            <person name="Richardson P."/>
        </authorList>
    </citation>
    <scope>NUCLEOTIDE SEQUENCE [LARGE SCALE GENOMIC DNA]</scope>
    <source>
        <strain>AU 1054</strain>
    </source>
</reference>